<feature type="chain" id="PRO_0000139695" description="Xanthine-guanine phosphoribosyltransferase">
    <location>
        <begin position="1"/>
        <end position="152"/>
    </location>
</feature>
<feature type="binding site" evidence="1">
    <location>
        <begin position="37"/>
        <end position="38"/>
    </location>
    <ligand>
        <name>5-phospho-alpha-D-ribose 1-diphosphate</name>
        <dbReference type="ChEBI" id="CHEBI:58017"/>
    </ligand>
</feature>
<feature type="binding site" evidence="1">
    <location>
        <position position="69"/>
    </location>
    <ligand>
        <name>5-phospho-alpha-D-ribose 1-diphosphate</name>
        <dbReference type="ChEBI" id="CHEBI:58017"/>
    </ligand>
</feature>
<feature type="binding site" evidence="2 3">
    <location>
        <position position="69"/>
    </location>
    <ligand>
        <name>GMP</name>
        <dbReference type="ChEBI" id="CHEBI:58115"/>
    </ligand>
</feature>
<feature type="binding site" evidence="1">
    <location>
        <begin position="88"/>
        <end position="96"/>
    </location>
    <ligand>
        <name>5-phospho-alpha-D-ribose 1-diphosphate</name>
        <dbReference type="ChEBI" id="CHEBI:58017"/>
    </ligand>
</feature>
<feature type="binding site" evidence="1">
    <location>
        <position position="89"/>
    </location>
    <ligand>
        <name>Mg(2+)</name>
        <dbReference type="ChEBI" id="CHEBI:18420"/>
    </ligand>
</feature>
<feature type="binding site" evidence="2 3">
    <location>
        <begin position="92"/>
        <end position="96"/>
    </location>
    <ligand>
        <name>GMP</name>
        <dbReference type="ChEBI" id="CHEBI:58115"/>
    </ligand>
</feature>
<feature type="binding site" evidence="1">
    <location>
        <position position="92"/>
    </location>
    <ligand>
        <name>guanine</name>
        <dbReference type="ChEBI" id="CHEBI:16235"/>
    </ligand>
</feature>
<feature type="binding site" evidence="1">
    <location>
        <position position="92"/>
    </location>
    <ligand>
        <name>xanthine</name>
        <dbReference type="ChEBI" id="CHEBI:17712"/>
    </ligand>
</feature>
<feature type="binding site" evidence="2 3">
    <location>
        <begin position="134"/>
        <end position="135"/>
    </location>
    <ligand>
        <name>GMP</name>
        <dbReference type="ChEBI" id="CHEBI:58115"/>
    </ligand>
</feature>
<feature type="binding site" evidence="1">
    <location>
        <position position="135"/>
    </location>
    <ligand>
        <name>guanine</name>
        <dbReference type="ChEBI" id="CHEBI:16235"/>
    </ligand>
</feature>
<feature type="binding site" evidence="1">
    <location>
        <position position="135"/>
    </location>
    <ligand>
        <name>xanthine</name>
        <dbReference type="ChEBI" id="CHEBI:17712"/>
    </ligand>
</feature>
<feature type="strand" evidence="6">
    <location>
        <begin position="4"/>
        <end position="6"/>
    </location>
</feature>
<feature type="helix" evidence="6">
    <location>
        <begin position="9"/>
        <end position="22"/>
    </location>
</feature>
<feature type="helix" evidence="6">
    <location>
        <begin position="26"/>
        <end position="28"/>
    </location>
</feature>
<feature type="strand" evidence="6">
    <location>
        <begin position="30"/>
        <end position="35"/>
    </location>
</feature>
<feature type="turn" evidence="6">
    <location>
        <begin position="36"/>
        <end position="39"/>
    </location>
</feature>
<feature type="helix" evidence="6">
    <location>
        <begin position="40"/>
        <end position="50"/>
    </location>
</feature>
<feature type="strand" evidence="6">
    <location>
        <begin position="55"/>
        <end position="60"/>
    </location>
</feature>
<feature type="strand" evidence="6">
    <location>
        <begin position="73"/>
        <end position="76"/>
    </location>
</feature>
<feature type="strand" evidence="6">
    <location>
        <begin position="84"/>
        <end position="94"/>
    </location>
</feature>
<feature type="helix" evidence="6">
    <location>
        <begin position="95"/>
        <end position="103"/>
    </location>
</feature>
<feature type="strand" evidence="6">
    <location>
        <begin position="107"/>
        <end position="114"/>
    </location>
</feature>
<feature type="turn" evidence="6">
    <location>
        <begin position="116"/>
        <end position="118"/>
    </location>
</feature>
<feature type="helix" evidence="6">
    <location>
        <begin position="119"/>
        <end position="121"/>
    </location>
</feature>
<feature type="strand" evidence="6">
    <location>
        <begin position="122"/>
        <end position="128"/>
    </location>
</feature>
<feature type="strand" evidence="6">
    <location>
        <begin position="134"/>
        <end position="136"/>
    </location>
</feature>
<feature type="helix" evidence="6">
    <location>
        <begin position="138"/>
        <end position="140"/>
    </location>
</feature>
<accession>Q8ZC05</accession>
<accession>Q0WC61</accession>
<accession>Q74WW8</accession>
<accession>Q7CK60</accession>
<name>XGPT_YERPE</name>
<evidence type="ECO:0000255" key="1">
    <source>
        <dbReference type="HAMAP-Rule" id="MF_01903"/>
    </source>
</evidence>
<evidence type="ECO:0000269" key="2">
    <source ref="4"/>
</evidence>
<evidence type="ECO:0007744" key="3">
    <source>
        <dbReference type="PDB" id="5XTK"/>
    </source>
</evidence>
<evidence type="ECO:0007744" key="4">
    <source>
        <dbReference type="PDB" id="6KP5"/>
    </source>
</evidence>
<evidence type="ECO:0007744" key="5">
    <source>
        <dbReference type="PDB" id="6KQC"/>
    </source>
</evidence>
<evidence type="ECO:0007829" key="6">
    <source>
        <dbReference type="PDB" id="6KP5"/>
    </source>
</evidence>
<gene>
    <name evidence="1" type="primary">gpt</name>
    <name type="ordered locus">YPO3225</name>
    <name type="ordered locus">y0963</name>
    <name type="ordered locus">YP_0708</name>
</gene>
<sequence length="152" mass="16966">MNEKYVVTWDMLQIHARKLAQRLLPAEQWKGIIAVSRGGLVPAGILARELGIRYVDTVCISSYDHDNQRDLKVLKRAEGDGEGFIVIDDLVDTGGTATAIREMYPKAHFVTIFAKPAGRPLVDDYVVDIPQNTWIEQPWDMAVTFVAPLSGK</sequence>
<organism>
    <name type="scientific">Yersinia pestis</name>
    <dbReference type="NCBI Taxonomy" id="632"/>
    <lineage>
        <taxon>Bacteria</taxon>
        <taxon>Pseudomonadati</taxon>
        <taxon>Pseudomonadota</taxon>
        <taxon>Gammaproteobacteria</taxon>
        <taxon>Enterobacterales</taxon>
        <taxon>Yersiniaceae</taxon>
        <taxon>Yersinia</taxon>
    </lineage>
</organism>
<reference key="1">
    <citation type="journal article" date="2001" name="Nature">
        <title>Genome sequence of Yersinia pestis, the causative agent of plague.</title>
        <authorList>
            <person name="Parkhill J."/>
            <person name="Wren B.W."/>
            <person name="Thomson N.R."/>
            <person name="Titball R.W."/>
            <person name="Holden M.T.G."/>
            <person name="Prentice M.B."/>
            <person name="Sebaihia M."/>
            <person name="James K.D."/>
            <person name="Churcher C.M."/>
            <person name="Mungall K.L."/>
            <person name="Baker S."/>
            <person name="Basham D."/>
            <person name="Bentley S.D."/>
            <person name="Brooks K."/>
            <person name="Cerdeno-Tarraga A.-M."/>
            <person name="Chillingworth T."/>
            <person name="Cronin A."/>
            <person name="Davies R.M."/>
            <person name="Davis P."/>
            <person name="Dougan G."/>
            <person name="Feltwell T."/>
            <person name="Hamlin N."/>
            <person name="Holroyd S."/>
            <person name="Jagels K."/>
            <person name="Karlyshev A.V."/>
            <person name="Leather S."/>
            <person name="Moule S."/>
            <person name="Oyston P.C.F."/>
            <person name="Quail M.A."/>
            <person name="Rutherford K.M."/>
            <person name="Simmonds M."/>
            <person name="Skelton J."/>
            <person name="Stevens K."/>
            <person name="Whitehead S."/>
            <person name="Barrell B.G."/>
        </authorList>
    </citation>
    <scope>NUCLEOTIDE SEQUENCE [LARGE SCALE GENOMIC DNA]</scope>
    <source>
        <strain>CO-92 / Biovar Orientalis</strain>
    </source>
</reference>
<reference key="2">
    <citation type="journal article" date="2002" name="J. Bacteriol.">
        <title>Genome sequence of Yersinia pestis KIM.</title>
        <authorList>
            <person name="Deng W."/>
            <person name="Burland V."/>
            <person name="Plunkett G. III"/>
            <person name="Boutin A."/>
            <person name="Mayhew G.F."/>
            <person name="Liss P."/>
            <person name="Perna N.T."/>
            <person name="Rose D.J."/>
            <person name="Mau B."/>
            <person name="Zhou S."/>
            <person name="Schwartz D.C."/>
            <person name="Fetherston J.D."/>
            <person name="Lindler L.E."/>
            <person name="Brubaker R.R."/>
            <person name="Plano G.V."/>
            <person name="Straley S.C."/>
            <person name="McDonough K.A."/>
            <person name="Nilles M.L."/>
            <person name="Matson J.S."/>
            <person name="Blattner F.R."/>
            <person name="Perry R.D."/>
        </authorList>
    </citation>
    <scope>NUCLEOTIDE SEQUENCE [LARGE SCALE GENOMIC DNA]</scope>
    <source>
        <strain>KIM10+ / Biovar Mediaevalis</strain>
    </source>
</reference>
<reference key="3">
    <citation type="journal article" date="2004" name="DNA Res.">
        <title>Complete genome sequence of Yersinia pestis strain 91001, an isolate avirulent to humans.</title>
        <authorList>
            <person name="Song Y."/>
            <person name="Tong Z."/>
            <person name="Wang J."/>
            <person name="Wang L."/>
            <person name="Guo Z."/>
            <person name="Han Y."/>
            <person name="Zhang J."/>
            <person name="Pei D."/>
            <person name="Zhou D."/>
            <person name="Qin H."/>
            <person name="Pang X."/>
            <person name="Han Y."/>
            <person name="Zhai J."/>
            <person name="Li M."/>
            <person name="Cui B."/>
            <person name="Qi Z."/>
            <person name="Jin L."/>
            <person name="Dai R."/>
            <person name="Chen F."/>
            <person name="Li S."/>
            <person name="Ye C."/>
            <person name="Du Z."/>
            <person name="Lin W."/>
            <person name="Wang J."/>
            <person name="Yu J."/>
            <person name="Yang H."/>
            <person name="Wang J."/>
            <person name="Huang P."/>
            <person name="Yang R."/>
        </authorList>
    </citation>
    <scope>NUCLEOTIDE SEQUENCE [LARGE SCALE GENOMIC DNA]</scope>
    <source>
        <strain>91001 / Biovar Mediaevalis</strain>
    </source>
</reference>
<reference evidence="3" key="4">
    <citation type="submission" date="2017-06" db="PDB data bank">
        <title>Crystal structure of Xanthine-guanine phosphoribosyltransferase from Yersinia pestis.</title>
        <authorList>
            <person name="Pavithra G.C."/>
            <person name="Ramagopal U.A."/>
        </authorList>
    </citation>
    <scope>X-RAY CRYSTALLOGRAPHY (1.74 ANGSTROMS) IN COMPLEX WITH GMP</scope>
</reference>
<reference evidence="4" key="5">
    <citation type="submission" date="2019-08" db="PDB data bank">
        <title>crystal structure of Xanthine-guanine phosphoribosyltransferase (XGPRT) from Yersinia pestis in P21212 space group.</title>
        <authorList>
            <person name="Lankipalli S."/>
            <person name="Ramagopal U.A."/>
        </authorList>
    </citation>
    <scope>X-RAY CRYSTALLOGRAPHY (1.10 ANGSTROMS)</scope>
</reference>
<reference evidence="5" key="6">
    <citation type="submission" date="2019-08" db="PDB data bank">
        <title>Crystal structure of E136F mutant of Xanthine-guanine phosphoribosyltransferase from Yersinia pestis.</title>
        <authorList>
            <person name="Lankipalli S."/>
            <person name="Ramagopal U.A."/>
        </authorList>
    </citation>
    <scope>X-RAY CRYSTALLOGRAPHY (1.70 ANGSTROMS) OF MUTANT PHE-136</scope>
</reference>
<proteinExistence type="evidence at protein level"/>
<dbReference type="EC" id="2.4.2.-" evidence="1"/>
<dbReference type="EC" id="2.4.2.22" evidence="1"/>
<dbReference type="EMBL" id="AL590842">
    <property type="protein sequence ID" value="CAL21819.1"/>
    <property type="molecule type" value="Genomic_DNA"/>
</dbReference>
<dbReference type="EMBL" id="AE009952">
    <property type="protein sequence ID" value="AAM84544.1"/>
    <property type="molecule type" value="Genomic_DNA"/>
</dbReference>
<dbReference type="EMBL" id="AE017042">
    <property type="protein sequence ID" value="AAS60974.1"/>
    <property type="molecule type" value="Genomic_DNA"/>
</dbReference>
<dbReference type="PIR" id="AH0391">
    <property type="entry name" value="AH0391"/>
</dbReference>
<dbReference type="RefSeq" id="WP_002208704.1">
    <property type="nucleotide sequence ID" value="NZ_WUCM01000034.1"/>
</dbReference>
<dbReference type="RefSeq" id="YP_002348127.1">
    <property type="nucleotide sequence ID" value="NC_003143.1"/>
</dbReference>
<dbReference type="PDB" id="5XTK">
    <property type="method" value="X-ray"/>
    <property type="resolution" value="1.74 A"/>
    <property type="chains" value="A/B=1-152"/>
</dbReference>
<dbReference type="PDB" id="6KP5">
    <property type="method" value="X-ray"/>
    <property type="resolution" value="1.10 A"/>
    <property type="chains" value="A/B=1-152"/>
</dbReference>
<dbReference type="PDB" id="6KQC">
    <property type="method" value="X-ray"/>
    <property type="resolution" value="1.70 A"/>
    <property type="chains" value="A/B=1-152"/>
</dbReference>
<dbReference type="PDBsum" id="5XTK"/>
<dbReference type="PDBsum" id="6KP5"/>
<dbReference type="PDBsum" id="6KQC"/>
<dbReference type="SMR" id="Q8ZC05"/>
<dbReference type="STRING" id="214092.YPO3225"/>
<dbReference type="PaxDb" id="214092-YPO3225"/>
<dbReference type="DNASU" id="1145910"/>
<dbReference type="EnsemblBacteria" id="AAS60974">
    <property type="protein sequence ID" value="AAS60974"/>
    <property type="gene ID" value="YP_0708"/>
</dbReference>
<dbReference type="GeneID" id="57975493"/>
<dbReference type="KEGG" id="ype:YPO3225"/>
<dbReference type="KEGG" id="ypk:y0963"/>
<dbReference type="KEGG" id="ypm:YP_0708"/>
<dbReference type="PATRIC" id="fig|214092.21.peg.3686"/>
<dbReference type="eggNOG" id="COG2236">
    <property type="taxonomic scope" value="Bacteria"/>
</dbReference>
<dbReference type="HOGENOM" id="CLU_080904_3_0_6"/>
<dbReference type="OMA" id="FHRDCRA"/>
<dbReference type="OrthoDB" id="9789690at2"/>
<dbReference type="UniPathway" id="UPA00602">
    <property type="reaction ID" value="UER00658"/>
</dbReference>
<dbReference type="UniPathway" id="UPA00909">
    <property type="reaction ID" value="UER00887"/>
</dbReference>
<dbReference type="Proteomes" id="UP000000815">
    <property type="component" value="Chromosome"/>
</dbReference>
<dbReference type="Proteomes" id="UP000001019">
    <property type="component" value="Chromosome"/>
</dbReference>
<dbReference type="Proteomes" id="UP000002490">
    <property type="component" value="Chromosome"/>
</dbReference>
<dbReference type="GO" id="GO:0005829">
    <property type="term" value="C:cytosol"/>
    <property type="evidence" value="ECO:0000318"/>
    <property type="project" value="GO_Central"/>
</dbReference>
<dbReference type="GO" id="GO:0005886">
    <property type="term" value="C:plasma membrane"/>
    <property type="evidence" value="ECO:0007669"/>
    <property type="project" value="UniProtKB-SubCell"/>
</dbReference>
<dbReference type="GO" id="GO:0052657">
    <property type="term" value="F:guanine phosphoribosyltransferase activity"/>
    <property type="evidence" value="ECO:0007669"/>
    <property type="project" value="RHEA"/>
</dbReference>
<dbReference type="GO" id="GO:0004422">
    <property type="term" value="F:hypoxanthine phosphoribosyltransferase activity"/>
    <property type="evidence" value="ECO:0000318"/>
    <property type="project" value="GO_Central"/>
</dbReference>
<dbReference type="GO" id="GO:0000287">
    <property type="term" value="F:magnesium ion binding"/>
    <property type="evidence" value="ECO:0007669"/>
    <property type="project" value="UniProtKB-UniRule"/>
</dbReference>
<dbReference type="GO" id="GO:0000310">
    <property type="term" value="F:xanthine phosphoribosyltransferase activity"/>
    <property type="evidence" value="ECO:0000318"/>
    <property type="project" value="GO_Central"/>
</dbReference>
<dbReference type="GO" id="GO:0032263">
    <property type="term" value="P:GMP salvage"/>
    <property type="evidence" value="ECO:0000318"/>
    <property type="project" value="GO_Central"/>
</dbReference>
<dbReference type="GO" id="GO:0032264">
    <property type="term" value="P:IMP salvage"/>
    <property type="evidence" value="ECO:0000318"/>
    <property type="project" value="GO_Central"/>
</dbReference>
<dbReference type="GO" id="GO:0006166">
    <property type="term" value="P:purine ribonucleoside salvage"/>
    <property type="evidence" value="ECO:0007669"/>
    <property type="project" value="UniProtKB-KW"/>
</dbReference>
<dbReference type="GO" id="GO:0032265">
    <property type="term" value="P:XMP salvage"/>
    <property type="evidence" value="ECO:0000318"/>
    <property type="project" value="GO_Central"/>
</dbReference>
<dbReference type="CDD" id="cd06223">
    <property type="entry name" value="PRTases_typeI"/>
    <property type="match status" value="1"/>
</dbReference>
<dbReference type="FunFam" id="3.40.50.2020:FF:000009">
    <property type="entry name" value="Xanthine phosphoribosyltransferase"/>
    <property type="match status" value="1"/>
</dbReference>
<dbReference type="Gene3D" id="3.40.50.2020">
    <property type="match status" value="1"/>
</dbReference>
<dbReference type="HAMAP" id="MF_01903">
    <property type="entry name" value="XGPRT"/>
    <property type="match status" value="1"/>
</dbReference>
<dbReference type="InterPro" id="IPR000836">
    <property type="entry name" value="PRibTrfase_dom"/>
</dbReference>
<dbReference type="InterPro" id="IPR029057">
    <property type="entry name" value="PRTase-like"/>
</dbReference>
<dbReference type="InterPro" id="IPR023747">
    <property type="entry name" value="Xanthine_Guanine_PRibTrfase"/>
</dbReference>
<dbReference type="NCBIfam" id="NF006613">
    <property type="entry name" value="PRK09177.1"/>
    <property type="match status" value="1"/>
</dbReference>
<dbReference type="PANTHER" id="PTHR39563">
    <property type="entry name" value="XANTHINE PHOSPHORIBOSYLTRANSFERASE"/>
    <property type="match status" value="1"/>
</dbReference>
<dbReference type="PANTHER" id="PTHR39563:SF1">
    <property type="entry name" value="XANTHINE-GUANINE PHOSPHORIBOSYLTRANSFERASE"/>
    <property type="match status" value="1"/>
</dbReference>
<dbReference type="Pfam" id="PF00156">
    <property type="entry name" value="Pribosyltran"/>
    <property type="match status" value="1"/>
</dbReference>
<dbReference type="SUPFAM" id="SSF53271">
    <property type="entry name" value="PRTase-like"/>
    <property type="match status" value="1"/>
</dbReference>
<dbReference type="PROSITE" id="PS00103">
    <property type="entry name" value="PUR_PYR_PR_TRANSFER"/>
    <property type="match status" value="1"/>
</dbReference>
<keyword id="KW-0002">3D-structure</keyword>
<keyword id="KW-0997">Cell inner membrane</keyword>
<keyword id="KW-1003">Cell membrane</keyword>
<keyword id="KW-0328">Glycosyltransferase</keyword>
<keyword id="KW-0460">Magnesium</keyword>
<keyword id="KW-0472">Membrane</keyword>
<keyword id="KW-0479">Metal-binding</keyword>
<keyword id="KW-0660">Purine salvage</keyword>
<keyword id="KW-1185">Reference proteome</keyword>
<keyword id="KW-0808">Transferase</keyword>
<protein>
    <recommendedName>
        <fullName evidence="1">Xanthine-guanine phosphoribosyltransferase</fullName>
        <shortName evidence="1">XGPRT</shortName>
        <ecNumber evidence="1">2.4.2.-</ecNumber>
        <ecNumber evidence="1">2.4.2.22</ecNumber>
    </recommendedName>
    <alternativeName>
        <fullName evidence="1">Xanthine phosphoribosyltransferase</fullName>
    </alternativeName>
</protein>
<comment type="function">
    <text evidence="1">Purine salvage pathway enzyme that catalyzes the transfer of the ribosyl-5-phosphate group from 5-phospho-alpha-D-ribose 1-diphosphate (PRPP) to the N9 position of the 6-oxopurines guanine and xanthine to form the corresponding ribonucleotides GMP (guanosine 5'-monophosphate) and XMP (xanthosine 5'-monophosphate), with the release of PPi. To a lesser extent, also acts on hypoxanthine.</text>
</comment>
<comment type="catalytic activity">
    <reaction evidence="1">
        <text>GMP + diphosphate = guanine + 5-phospho-alpha-D-ribose 1-diphosphate</text>
        <dbReference type="Rhea" id="RHEA:25424"/>
        <dbReference type="ChEBI" id="CHEBI:16235"/>
        <dbReference type="ChEBI" id="CHEBI:33019"/>
        <dbReference type="ChEBI" id="CHEBI:58017"/>
        <dbReference type="ChEBI" id="CHEBI:58115"/>
    </reaction>
    <physiologicalReaction direction="right-to-left" evidence="1">
        <dbReference type="Rhea" id="RHEA:25426"/>
    </physiologicalReaction>
</comment>
<comment type="catalytic activity">
    <reaction evidence="1">
        <text>XMP + diphosphate = xanthine + 5-phospho-alpha-D-ribose 1-diphosphate</text>
        <dbReference type="Rhea" id="RHEA:10800"/>
        <dbReference type="ChEBI" id="CHEBI:17712"/>
        <dbReference type="ChEBI" id="CHEBI:33019"/>
        <dbReference type="ChEBI" id="CHEBI:57464"/>
        <dbReference type="ChEBI" id="CHEBI:58017"/>
        <dbReference type="EC" id="2.4.2.22"/>
    </reaction>
    <physiologicalReaction direction="right-to-left" evidence="1">
        <dbReference type="Rhea" id="RHEA:10802"/>
    </physiologicalReaction>
</comment>
<comment type="catalytic activity">
    <reaction evidence="1">
        <text>IMP + diphosphate = hypoxanthine + 5-phospho-alpha-D-ribose 1-diphosphate</text>
        <dbReference type="Rhea" id="RHEA:17973"/>
        <dbReference type="ChEBI" id="CHEBI:17368"/>
        <dbReference type="ChEBI" id="CHEBI:33019"/>
        <dbReference type="ChEBI" id="CHEBI:58017"/>
        <dbReference type="ChEBI" id="CHEBI:58053"/>
    </reaction>
    <physiologicalReaction direction="right-to-left" evidence="1">
        <dbReference type="Rhea" id="RHEA:17975"/>
    </physiologicalReaction>
</comment>
<comment type="cofactor">
    <cofactor evidence="1">
        <name>Mg(2+)</name>
        <dbReference type="ChEBI" id="CHEBI:18420"/>
    </cofactor>
</comment>
<comment type="pathway">
    <text evidence="1">Purine metabolism; GMP biosynthesis via salvage pathway; GMP from guanine: step 1/1.</text>
</comment>
<comment type="pathway">
    <text evidence="1">Purine metabolism; XMP biosynthesis via salvage pathway; XMP from xanthine: step 1/1.</text>
</comment>
<comment type="subunit">
    <text evidence="1">Homotetramer.</text>
</comment>
<comment type="subcellular location">
    <subcellularLocation>
        <location evidence="1">Cell inner membrane</location>
        <topology evidence="1">Peripheral membrane protein</topology>
    </subcellularLocation>
</comment>
<comment type="similarity">
    <text evidence="1">Belongs to the purine/pyrimidine phosphoribosyltransferase family. XGPT subfamily.</text>
</comment>